<feature type="chain" id="PRO_1000075493" description="Peptide chain release factor 1">
    <location>
        <begin position="1"/>
        <end position="355"/>
    </location>
</feature>
<feature type="modified residue" description="N5-methylglutamine" evidence="1">
    <location>
        <position position="233"/>
    </location>
</feature>
<comment type="function">
    <text evidence="1">Peptide chain release factor 1 directs the termination of translation in response to the peptide chain termination codons UAG and UAA.</text>
</comment>
<comment type="subcellular location">
    <subcellularLocation>
        <location evidence="1">Cytoplasm</location>
    </subcellularLocation>
</comment>
<comment type="PTM">
    <text evidence="1">Methylated by PrmC. Methylation increases the termination efficiency of RF1.</text>
</comment>
<comment type="similarity">
    <text evidence="1">Belongs to the prokaryotic/mitochondrial release factor family.</text>
</comment>
<gene>
    <name evidence="1" type="primary">prfA</name>
    <name type="ordered locus">DehaBAV1_1020</name>
</gene>
<name>RF1_DEHMB</name>
<proteinExistence type="inferred from homology"/>
<evidence type="ECO:0000255" key="1">
    <source>
        <dbReference type="HAMAP-Rule" id="MF_00093"/>
    </source>
</evidence>
<keyword id="KW-0963">Cytoplasm</keyword>
<keyword id="KW-0488">Methylation</keyword>
<keyword id="KW-0648">Protein biosynthesis</keyword>
<accession>A5FQC5</accession>
<protein>
    <recommendedName>
        <fullName evidence="1">Peptide chain release factor 1</fullName>
        <shortName evidence="1">RF-1</shortName>
    </recommendedName>
</protein>
<organism>
    <name type="scientific">Dehalococcoides mccartyi (strain ATCC BAA-2100 / JCM 16839 / KCTC 5957 / BAV1)</name>
    <dbReference type="NCBI Taxonomy" id="216389"/>
    <lineage>
        <taxon>Bacteria</taxon>
        <taxon>Bacillati</taxon>
        <taxon>Chloroflexota</taxon>
        <taxon>Dehalococcoidia</taxon>
        <taxon>Dehalococcoidales</taxon>
        <taxon>Dehalococcoidaceae</taxon>
        <taxon>Dehalococcoides</taxon>
    </lineage>
</organism>
<dbReference type="EMBL" id="CP000688">
    <property type="protein sequence ID" value="ABQ17600.1"/>
    <property type="molecule type" value="Genomic_DNA"/>
</dbReference>
<dbReference type="SMR" id="A5FQC5"/>
<dbReference type="KEGG" id="deb:DehaBAV1_1020"/>
<dbReference type="PATRIC" id="fig|216389.18.peg.1075"/>
<dbReference type="HOGENOM" id="CLU_036856_0_1_0"/>
<dbReference type="GO" id="GO:0005737">
    <property type="term" value="C:cytoplasm"/>
    <property type="evidence" value="ECO:0007669"/>
    <property type="project" value="UniProtKB-SubCell"/>
</dbReference>
<dbReference type="GO" id="GO:0016149">
    <property type="term" value="F:translation release factor activity, codon specific"/>
    <property type="evidence" value="ECO:0007669"/>
    <property type="project" value="UniProtKB-UniRule"/>
</dbReference>
<dbReference type="FunFam" id="3.30.160.20:FF:000004">
    <property type="entry name" value="Peptide chain release factor 1"/>
    <property type="match status" value="1"/>
</dbReference>
<dbReference type="FunFam" id="3.30.70.1660:FF:000002">
    <property type="entry name" value="Peptide chain release factor 1"/>
    <property type="match status" value="1"/>
</dbReference>
<dbReference type="Gene3D" id="3.30.160.20">
    <property type="match status" value="1"/>
</dbReference>
<dbReference type="Gene3D" id="3.30.70.1660">
    <property type="match status" value="2"/>
</dbReference>
<dbReference type="Gene3D" id="6.10.140.1950">
    <property type="match status" value="1"/>
</dbReference>
<dbReference type="HAMAP" id="MF_00093">
    <property type="entry name" value="Rel_fac_1"/>
    <property type="match status" value="1"/>
</dbReference>
<dbReference type="InterPro" id="IPR005139">
    <property type="entry name" value="PCRF"/>
</dbReference>
<dbReference type="InterPro" id="IPR000352">
    <property type="entry name" value="Pep_chain_release_fac_I"/>
</dbReference>
<dbReference type="InterPro" id="IPR045853">
    <property type="entry name" value="Pep_chain_release_fac_I_sf"/>
</dbReference>
<dbReference type="InterPro" id="IPR050057">
    <property type="entry name" value="Prokaryotic/Mito_RF"/>
</dbReference>
<dbReference type="InterPro" id="IPR004373">
    <property type="entry name" value="RF-1"/>
</dbReference>
<dbReference type="NCBIfam" id="TIGR00019">
    <property type="entry name" value="prfA"/>
    <property type="match status" value="1"/>
</dbReference>
<dbReference type="NCBIfam" id="NF001859">
    <property type="entry name" value="PRK00591.1"/>
    <property type="match status" value="1"/>
</dbReference>
<dbReference type="PANTHER" id="PTHR43804">
    <property type="entry name" value="LD18447P"/>
    <property type="match status" value="1"/>
</dbReference>
<dbReference type="PANTHER" id="PTHR43804:SF7">
    <property type="entry name" value="LD18447P"/>
    <property type="match status" value="1"/>
</dbReference>
<dbReference type="Pfam" id="PF03462">
    <property type="entry name" value="PCRF"/>
    <property type="match status" value="1"/>
</dbReference>
<dbReference type="Pfam" id="PF00472">
    <property type="entry name" value="RF-1"/>
    <property type="match status" value="1"/>
</dbReference>
<dbReference type="SMART" id="SM00937">
    <property type="entry name" value="PCRF"/>
    <property type="match status" value="1"/>
</dbReference>
<dbReference type="SUPFAM" id="SSF75620">
    <property type="entry name" value="Release factor"/>
    <property type="match status" value="1"/>
</dbReference>
<sequence>MLERLENCEKRFIEIEEEISKPEVINDARLVRTLAQERADLQDKVEMYRRYKTMAKELEEAKNLLESEKDEDMRGMVRGEIENLEKSLTDLYEQMTFELLPKDPNDDKSIIMEIRAGTGGDEAGLFASDLYKMYIRYALLKNWKTEVIDINGNVAGIIKEVVFEVNGKGAFSRLKYERGVHRVQRVPQTEASGRIHTSTATVAVLPQVEEVDIDINMDEVRVDIFHSSGAGGQNVQKVATAIRLTHMPTGLVVCCQDERSQLKNKNKAFAVLRARLMELEQSKVDEERTESRRAQVGQADRSEKIRTYNFPQDRLTDHRIGLTAHNLPHILEGYLDEIIDTLATHEQTELLKGED</sequence>
<reference key="1">
    <citation type="submission" date="2007-05" db="EMBL/GenBank/DDBJ databases">
        <title>Complete sequence of Dehalococcoides sp. BAV1.</title>
        <authorList>
            <consortium name="US DOE Joint Genome Institute"/>
            <person name="Copeland A."/>
            <person name="Lucas S."/>
            <person name="Lapidus A."/>
            <person name="Barry K."/>
            <person name="Detter J.C."/>
            <person name="Glavina del Rio T."/>
            <person name="Hammon N."/>
            <person name="Israni S."/>
            <person name="Pitluck S."/>
            <person name="Lowry S."/>
            <person name="Clum A."/>
            <person name="Schmutz J."/>
            <person name="Larimer F."/>
            <person name="Land M."/>
            <person name="Hauser L."/>
            <person name="Kyrpides N."/>
            <person name="Kim E."/>
            <person name="Ritalahti K.M."/>
            <person name="Loeffler F."/>
            <person name="Richardson P."/>
        </authorList>
    </citation>
    <scope>NUCLEOTIDE SEQUENCE [LARGE SCALE GENOMIC DNA]</scope>
    <source>
        <strain>ATCC BAA-2100 / JCM 16839 / KCTC 5957 / BAV1</strain>
    </source>
</reference>